<accession>Q2JQ36</accession>
<proteinExistence type="inferred from homology"/>
<organism>
    <name type="scientific">Synechococcus sp. (strain JA-2-3B'a(2-13))</name>
    <name type="common">Cyanobacteria bacterium Yellowstone B-Prime</name>
    <dbReference type="NCBI Taxonomy" id="321332"/>
    <lineage>
        <taxon>Bacteria</taxon>
        <taxon>Bacillati</taxon>
        <taxon>Cyanobacteriota</taxon>
        <taxon>Cyanophyceae</taxon>
        <taxon>Synechococcales</taxon>
        <taxon>Synechococcaceae</taxon>
        <taxon>Synechococcus</taxon>
    </lineage>
</organism>
<evidence type="ECO:0000255" key="1">
    <source>
        <dbReference type="HAMAP-Rule" id="MF_00011"/>
    </source>
</evidence>
<feature type="chain" id="PRO_1000000936" description="Adenylosuccinate synthetase">
    <location>
        <begin position="1"/>
        <end position="449"/>
    </location>
</feature>
<feature type="active site" description="Proton acceptor" evidence="1">
    <location>
        <position position="13"/>
    </location>
</feature>
<feature type="active site" description="Proton donor" evidence="1">
    <location>
        <position position="41"/>
    </location>
</feature>
<feature type="binding site" evidence="1">
    <location>
        <begin position="12"/>
        <end position="18"/>
    </location>
    <ligand>
        <name>GTP</name>
        <dbReference type="ChEBI" id="CHEBI:37565"/>
    </ligand>
</feature>
<feature type="binding site" description="in other chain" evidence="1">
    <location>
        <begin position="13"/>
        <end position="16"/>
    </location>
    <ligand>
        <name>IMP</name>
        <dbReference type="ChEBI" id="CHEBI:58053"/>
        <note>ligand shared between dimeric partners</note>
    </ligand>
</feature>
<feature type="binding site" evidence="1">
    <location>
        <position position="13"/>
    </location>
    <ligand>
        <name>Mg(2+)</name>
        <dbReference type="ChEBI" id="CHEBI:18420"/>
    </ligand>
</feature>
<feature type="binding site" description="in other chain" evidence="1">
    <location>
        <begin position="38"/>
        <end position="41"/>
    </location>
    <ligand>
        <name>IMP</name>
        <dbReference type="ChEBI" id="CHEBI:58053"/>
        <note>ligand shared between dimeric partners</note>
    </ligand>
</feature>
<feature type="binding site" evidence="1">
    <location>
        <begin position="40"/>
        <end position="42"/>
    </location>
    <ligand>
        <name>GTP</name>
        <dbReference type="ChEBI" id="CHEBI:37565"/>
    </ligand>
</feature>
<feature type="binding site" evidence="1">
    <location>
        <position position="40"/>
    </location>
    <ligand>
        <name>Mg(2+)</name>
        <dbReference type="ChEBI" id="CHEBI:18420"/>
    </ligand>
</feature>
<feature type="binding site" description="in other chain" evidence="1">
    <location>
        <position position="128"/>
    </location>
    <ligand>
        <name>IMP</name>
        <dbReference type="ChEBI" id="CHEBI:58053"/>
        <note>ligand shared between dimeric partners</note>
    </ligand>
</feature>
<feature type="binding site" evidence="1">
    <location>
        <position position="142"/>
    </location>
    <ligand>
        <name>IMP</name>
        <dbReference type="ChEBI" id="CHEBI:58053"/>
        <note>ligand shared between dimeric partners</note>
    </ligand>
</feature>
<feature type="binding site" description="in other chain" evidence="1">
    <location>
        <position position="223"/>
    </location>
    <ligand>
        <name>IMP</name>
        <dbReference type="ChEBI" id="CHEBI:58053"/>
        <note>ligand shared between dimeric partners</note>
    </ligand>
</feature>
<feature type="binding site" description="in other chain" evidence="1">
    <location>
        <position position="238"/>
    </location>
    <ligand>
        <name>IMP</name>
        <dbReference type="ChEBI" id="CHEBI:58053"/>
        <note>ligand shared between dimeric partners</note>
    </ligand>
</feature>
<feature type="binding site" evidence="1">
    <location>
        <begin position="298"/>
        <end position="304"/>
    </location>
    <ligand>
        <name>substrate</name>
    </ligand>
</feature>
<feature type="binding site" description="in other chain" evidence="1">
    <location>
        <position position="302"/>
    </location>
    <ligand>
        <name>IMP</name>
        <dbReference type="ChEBI" id="CHEBI:58053"/>
        <note>ligand shared between dimeric partners</note>
    </ligand>
</feature>
<feature type="binding site" evidence="1">
    <location>
        <position position="304"/>
    </location>
    <ligand>
        <name>GTP</name>
        <dbReference type="ChEBI" id="CHEBI:37565"/>
    </ligand>
</feature>
<feature type="binding site" evidence="1">
    <location>
        <begin position="330"/>
        <end position="332"/>
    </location>
    <ligand>
        <name>GTP</name>
        <dbReference type="ChEBI" id="CHEBI:37565"/>
    </ligand>
</feature>
<feature type="binding site" evidence="1">
    <location>
        <begin position="412"/>
        <end position="414"/>
    </location>
    <ligand>
        <name>GTP</name>
        <dbReference type="ChEBI" id="CHEBI:37565"/>
    </ligand>
</feature>
<keyword id="KW-0963">Cytoplasm</keyword>
<keyword id="KW-0342">GTP-binding</keyword>
<keyword id="KW-0436">Ligase</keyword>
<keyword id="KW-0460">Magnesium</keyword>
<keyword id="KW-0479">Metal-binding</keyword>
<keyword id="KW-0547">Nucleotide-binding</keyword>
<keyword id="KW-0658">Purine biosynthesis</keyword>
<keyword id="KW-1185">Reference proteome</keyword>
<dbReference type="EC" id="6.3.4.4" evidence="1"/>
<dbReference type="EMBL" id="CP000240">
    <property type="protein sequence ID" value="ABD01080.1"/>
    <property type="molecule type" value="Genomic_DNA"/>
</dbReference>
<dbReference type="RefSeq" id="WP_011431751.1">
    <property type="nucleotide sequence ID" value="NC_007776.1"/>
</dbReference>
<dbReference type="SMR" id="Q2JQ36"/>
<dbReference type="STRING" id="321332.CYB_0079"/>
<dbReference type="KEGG" id="cyb:CYB_0079"/>
<dbReference type="eggNOG" id="COG0104">
    <property type="taxonomic scope" value="Bacteria"/>
</dbReference>
<dbReference type="HOGENOM" id="CLU_029848_0_0_3"/>
<dbReference type="OrthoDB" id="9807553at2"/>
<dbReference type="UniPathway" id="UPA00075">
    <property type="reaction ID" value="UER00335"/>
</dbReference>
<dbReference type="Proteomes" id="UP000001938">
    <property type="component" value="Chromosome"/>
</dbReference>
<dbReference type="GO" id="GO:0005737">
    <property type="term" value="C:cytoplasm"/>
    <property type="evidence" value="ECO:0007669"/>
    <property type="project" value="UniProtKB-SubCell"/>
</dbReference>
<dbReference type="GO" id="GO:0004019">
    <property type="term" value="F:adenylosuccinate synthase activity"/>
    <property type="evidence" value="ECO:0007669"/>
    <property type="project" value="UniProtKB-UniRule"/>
</dbReference>
<dbReference type="GO" id="GO:0005525">
    <property type="term" value="F:GTP binding"/>
    <property type="evidence" value="ECO:0007669"/>
    <property type="project" value="UniProtKB-UniRule"/>
</dbReference>
<dbReference type="GO" id="GO:0000287">
    <property type="term" value="F:magnesium ion binding"/>
    <property type="evidence" value="ECO:0007669"/>
    <property type="project" value="UniProtKB-UniRule"/>
</dbReference>
<dbReference type="GO" id="GO:0044208">
    <property type="term" value="P:'de novo' AMP biosynthetic process"/>
    <property type="evidence" value="ECO:0007669"/>
    <property type="project" value="UniProtKB-UniRule"/>
</dbReference>
<dbReference type="GO" id="GO:0046040">
    <property type="term" value="P:IMP metabolic process"/>
    <property type="evidence" value="ECO:0007669"/>
    <property type="project" value="TreeGrafter"/>
</dbReference>
<dbReference type="CDD" id="cd03108">
    <property type="entry name" value="AdSS"/>
    <property type="match status" value="1"/>
</dbReference>
<dbReference type="FunFam" id="1.10.300.10:FF:000001">
    <property type="entry name" value="Adenylosuccinate synthetase"/>
    <property type="match status" value="1"/>
</dbReference>
<dbReference type="FunFam" id="3.90.170.10:FF:000001">
    <property type="entry name" value="Adenylosuccinate synthetase"/>
    <property type="match status" value="1"/>
</dbReference>
<dbReference type="Gene3D" id="3.40.440.10">
    <property type="entry name" value="Adenylosuccinate Synthetase, subunit A, domain 1"/>
    <property type="match status" value="1"/>
</dbReference>
<dbReference type="Gene3D" id="1.10.300.10">
    <property type="entry name" value="Adenylosuccinate Synthetase, subunit A, domain 2"/>
    <property type="match status" value="1"/>
</dbReference>
<dbReference type="Gene3D" id="3.90.170.10">
    <property type="entry name" value="Adenylosuccinate Synthetase, subunit A, domain 3"/>
    <property type="match status" value="1"/>
</dbReference>
<dbReference type="HAMAP" id="MF_00011">
    <property type="entry name" value="Adenylosucc_synth"/>
    <property type="match status" value="1"/>
</dbReference>
<dbReference type="InterPro" id="IPR018220">
    <property type="entry name" value="Adenylosuccin_syn_GTP-bd"/>
</dbReference>
<dbReference type="InterPro" id="IPR033128">
    <property type="entry name" value="Adenylosuccin_syn_Lys_AS"/>
</dbReference>
<dbReference type="InterPro" id="IPR042109">
    <property type="entry name" value="Adenylosuccinate_synth_dom1"/>
</dbReference>
<dbReference type="InterPro" id="IPR042110">
    <property type="entry name" value="Adenylosuccinate_synth_dom2"/>
</dbReference>
<dbReference type="InterPro" id="IPR042111">
    <property type="entry name" value="Adenylosuccinate_synth_dom3"/>
</dbReference>
<dbReference type="InterPro" id="IPR001114">
    <property type="entry name" value="Adenylosuccinate_synthetase"/>
</dbReference>
<dbReference type="InterPro" id="IPR027417">
    <property type="entry name" value="P-loop_NTPase"/>
</dbReference>
<dbReference type="NCBIfam" id="NF002223">
    <property type="entry name" value="PRK01117.1"/>
    <property type="match status" value="1"/>
</dbReference>
<dbReference type="NCBIfam" id="TIGR00184">
    <property type="entry name" value="purA"/>
    <property type="match status" value="1"/>
</dbReference>
<dbReference type="PANTHER" id="PTHR11846">
    <property type="entry name" value="ADENYLOSUCCINATE SYNTHETASE"/>
    <property type="match status" value="1"/>
</dbReference>
<dbReference type="PANTHER" id="PTHR11846:SF0">
    <property type="entry name" value="ADENYLOSUCCINATE SYNTHETASE"/>
    <property type="match status" value="1"/>
</dbReference>
<dbReference type="Pfam" id="PF00709">
    <property type="entry name" value="Adenylsucc_synt"/>
    <property type="match status" value="1"/>
</dbReference>
<dbReference type="SMART" id="SM00788">
    <property type="entry name" value="Adenylsucc_synt"/>
    <property type="match status" value="1"/>
</dbReference>
<dbReference type="SUPFAM" id="SSF52540">
    <property type="entry name" value="P-loop containing nucleoside triphosphate hydrolases"/>
    <property type="match status" value="1"/>
</dbReference>
<dbReference type="PROSITE" id="PS01266">
    <property type="entry name" value="ADENYLOSUCCIN_SYN_1"/>
    <property type="match status" value="1"/>
</dbReference>
<dbReference type="PROSITE" id="PS00513">
    <property type="entry name" value="ADENYLOSUCCIN_SYN_2"/>
    <property type="match status" value="1"/>
</dbReference>
<sequence length="449" mass="49352">MANVVVVGAQWGDEGKGKITDLLSEKAHVVVRYQGGVNAGHTLVVGGQTFKLHLIPSGILYPDKRCIIASGTVIDPEVLLAEIDQLHQLGISTDNLFIAETAHVTLPYHRVIDIAEEERRGIYRLGTTGRGIGPTYADKAERMGIRVVDLMYPDQLRERLSWAIPYKNVLLEKIYNLPPLDPEPIIEQYLAYAERLRPYVTDAALLLTQAIEDRENILFEGAQGTLLDLDYGTYPYVTSSHPIAGGACIGAGIGPTSIDRVIGVAKAYTTRVGEGPFPTELKDEIGAYLGATGAEFGTTTGRQRRCGWFDGVIGRYAVRINGLDCLAITKLDVLDGLDEIKVCVAYEYQGREIRHFPSDARVFAQCKPIYETLPGWKCSTKDCRSIQDLPPEAHDYLKFLAQLMQVPIAIVSLGASRDQTIIVEDPIHGPKRALLYPNGGKRAHALMPD</sequence>
<reference key="1">
    <citation type="journal article" date="2007" name="ISME J.">
        <title>Population level functional diversity in a microbial community revealed by comparative genomic and metagenomic analyses.</title>
        <authorList>
            <person name="Bhaya D."/>
            <person name="Grossman A.R."/>
            <person name="Steunou A.-S."/>
            <person name="Khuri N."/>
            <person name="Cohan F.M."/>
            <person name="Hamamura N."/>
            <person name="Melendrez M.C."/>
            <person name="Bateson M.M."/>
            <person name="Ward D.M."/>
            <person name="Heidelberg J.F."/>
        </authorList>
    </citation>
    <scope>NUCLEOTIDE SEQUENCE [LARGE SCALE GENOMIC DNA]</scope>
    <source>
        <strain>JA-2-3B'a(2-13)</strain>
    </source>
</reference>
<gene>
    <name evidence="1" type="primary">purA</name>
    <name type="ordered locus">CYB_0079</name>
</gene>
<name>PURA_SYNJB</name>
<comment type="function">
    <text evidence="1">Plays an important role in the de novo pathway of purine nucleotide biosynthesis. Catalyzes the first committed step in the biosynthesis of AMP from IMP.</text>
</comment>
<comment type="catalytic activity">
    <reaction evidence="1">
        <text>IMP + L-aspartate + GTP = N(6)-(1,2-dicarboxyethyl)-AMP + GDP + phosphate + 2 H(+)</text>
        <dbReference type="Rhea" id="RHEA:15753"/>
        <dbReference type="ChEBI" id="CHEBI:15378"/>
        <dbReference type="ChEBI" id="CHEBI:29991"/>
        <dbReference type="ChEBI" id="CHEBI:37565"/>
        <dbReference type="ChEBI" id="CHEBI:43474"/>
        <dbReference type="ChEBI" id="CHEBI:57567"/>
        <dbReference type="ChEBI" id="CHEBI:58053"/>
        <dbReference type="ChEBI" id="CHEBI:58189"/>
        <dbReference type="EC" id="6.3.4.4"/>
    </reaction>
</comment>
<comment type="cofactor">
    <cofactor evidence="1">
        <name>Mg(2+)</name>
        <dbReference type="ChEBI" id="CHEBI:18420"/>
    </cofactor>
    <text evidence="1">Binds 1 Mg(2+) ion per subunit.</text>
</comment>
<comment type="pathway">
    <text evidence="1">Purine metabolism; AMP biosynthesis via de novo pathway; AMP from IMP: step 1/2.</text>
</comment>
<comment type="subunit">
    <text evidence="1">Homodimer.</text>
</comment>
<comment type="subcellular location">
    <subcellularLocation>
        <location evidence="1">Cytoplasm</location>
    </subcellularLocation>
</comment>
<comment type="similarity">
    <text evidence="1">Belongs to the adenylosuccinate synthetase family.</text>
</comment>
<protein>
    <recommendedName>
        <fullName evidence="1">Adenylosuccinate synthetase</fullName>
        <shortName evidence="1">AMPSase</shortName>
        <shortName evidence="1">AdSS</shortName>
        <ecNumber evidence="1">6.3.4.4</ecNumber>
    </recommendedName>
    <alternativeName>
        <fullName evidence="1">IMP--aspartate ligase</fullName>
    </alternativeName>
</protein>